<feature type="chain" id="PRO_0000259119" description="Large ribosomal subunit protein bL31B">
    <location>
        <begin position="1"/>
        <end position="87"/>
    </location>
</feature>
<gene>
    <name evidence="1" type="primary">rpmE2</name>
    <name type="ordered locus">SBO_0223</name>
</gene>
<comment type="subunit">
    <text evidence="1">Part of the 50S ribosomal subunit.</text>
</comment>
<comment type="similarity">
    <text evidence="1">Belongs to the bacterial ribosomal protein bL31 family. Type B subfamily.</text>
</comment>
<reference key="1">
    <citation type="journal article" date="2005" name="Nucleic Acids Res.">
        <title>Genome dynamics and diversity of Shigella species, the etiologic agents of bacillary dysentery.</title>
        <authorList>
            <person name="Yang F."/>
            <person name="Yang J."/>
            <person name="Zhang X."/>
            <person name="Chen L."/>
            <person name="Jiang Y."/>
            <person name="Yan Y."/>
            <person name="Tang X."/>
            <person name="Wang J."/>
            <person name="Xiong Z."/>
            <person name="Dong J."/>
            <person name="Xue Y."/>
            <person name="Zhu Y."/>
            <person name="Xu X."/>
            <person name="Sun L."/>
            <person name="Chen S."/>
            <person name="Nie H."/>
            <person name="Peng J."/>
            <person name="Xu J."/>
            <person name="Wang Y."/>
            <person name="Yuan Z."/>
            <person name="Wen Y."/>
            <person name="Yao Z."/>
            <person name="Shen Y."/>
            <person name="Qiang B."/>
            <person name="Hou Y."/>
            <person name="Yu J."/>
            <person name="Jin Q."/>
        </authorList>
    </citation>
    <scope>NUCLEOTIDE SEQUENCE [LARGE SCALE GENOMIC DNA]</scope>
    <source>
        <strain>Sb227</strain>
    </source>
</reference>
<proteinExistence type="inferred from homology"/>
<protein>
    <recommendedName>
        <fullName evidence="1">Large ribosomal subunit protein bL31B</fullName>
    </recommendedName>
    <alternativeName>
        <fullName evidence="2">50S ribosomal protein L31 type B</fullName>
    </alternativeName>
</protein>
<organism>
    <name type="scientific">Shigella boydii serotype 4 (strain Sb227)</name>
    <dbReference type="NCBI Taxonomy" id="300268"/>
    <lineage>
        <taxon>Bacteria</taxon>
        <taxon>Pseudomonadati</taxon>
        <taxon>Pseudomonadota</taxon>
        <taxon>Gammaproteobacteria</taxon>
        <taxon>Enterobacterales</taxon>
        <taxon>Enterobacteriaceae</taxon>
        <taxon>Shigella</taxon>
    </lineage>
</organism>
<sequence length="87" mass="9920">MKPNIHPEYRTVVFHDTSVDEYFKIGSTIKTDREIELDGVTYPYVTIDVSSKSHPFYTGKLRTVASEGNVARFTQRFGRFVSTKKGA</sequence>
<name>RL31B_SHIBS</name>
<evidence type="ECO:0000255" key="1">
    <source>
        <dbReference type="HAMAP-Rule" id="MF_00502"/>
    </source>
</evidence>
<evidence type="ECO:0000305" key="2"/>
<keyword id="KW-0687">Ribonucleoprotein</keyword>
<keyword id="KW-0689">Ribosomal protein</keyword>
<accession>Q325R6</accession>
<dbReference type="EMBL" id="CP000036">
    <property type="protein sequence ID" value="ABB64942.1"/>
    <property type="molecule type" value="Genomic_DNA"/>
</dbReference>
<dbReference type="RefSeq" id="WP_000803998.1">
    <property type="nucleotide sequence ID" value="NC_007613.1"/>
</dbReference>
<dbReference type="SMR" id="Q325R6"/>
<dbReference type="KEGG" id="sbo:SBO_0223"/>
<dbReference type="HOGENOM" id="CLU_114306_2_1_6"/>
<dbReference type="Proteomes" id="UP000007067">
    <property type="component" value="Chromosome"/>
</dbReference>
<dbReference type="GO" id="GO:1990904">
    <property type="term" value="C:ribonucleoprotein complex"/>
    <property type="evidence" value="ECO:0007669"/>
    <property type="project" value="UniProtKB-KW"/>
</dbReference>
<dbReference type="GO" id="GO:0005840">
    <property type="term" value="C:ribosome"/>
    <property type="evidence" value="ECO:0007669"/>
    <property type="project" value="UniProtKB-KW"/>
</dbReference>
<dbReference type="GO" id="GO:0003735">
    <property type="term" value="F:structural constituent of ribosome"/>
    <property type="evidence" value="ECO:0007669"/>
    <property type="project" value="InterPro"/>
</dbReference>
<dbReference type="GO" id="GO:0006412">
    <property type="term" value="P:translation"/>
    <property type="evidence" value="ECO:0007669"/>
    <property type="project" value="UniProtKB-UniRule"/>
</dbReference>
<dbReference type="FunFam" id="4.10.830.30:FF:000002">
    <property type="entry name" value="50S ribosomal protein L31 type B"/>
    <property type="match status" value="1"/>
</dbReference>
<dbReference type="Gene3D" id="4.10.830.30">
    <property type="entry name" value="Ribosomal protein L31"/>
    <property type="match status" value="1"/>
</dbReference>
<dbReference type="HAMAP" id="MF_00502">
    <property type="entry name" value="Ribosomal_bL31_2"/>
    <property type="match status" value="1"/>
</dbReference>
<dbReference type="InterPro" id="IPR034704">
    <property type="entry name" value="Ribosomal_bL28/bL31-like_sf"/>
</dbReference>
<dbReference type="InterPro" id="IPR002150">
    <property type="entry name" value="Ribosomal_bL31"/>
</dbReference>
<dbReference type="InterPro" id="IPR027493">
    <property type="entry name" value="Ribosomal_bL31_B"/>
</dbReference>
<dbReference type="InterPro" id="IPR042105">
    <property type="entry name" value="Ribosomal_bL31_sf"/>
</dbReference>
<dbReference type="NCBIfam" id="TIGR00105">
    <property type="entry name" value="L31"/>
    <property type="match status" value="1"/>
</dbReference>
<dbReference type="NCBIfam" id="NF002462">
    <property type="entry name" value="PRK01678.1"/>
    <property type="match status" value="1"/>
</dbReference>
<dbReference type="PANTHER" id="PTHR33280">
    <property type="entry name" value="50S RIBOSOMAL PROTEIN L31, CHLOROPLASTIC"/>
    <property type="match status" value="1"/>
</dbReference>
<dbReference type="PANTHER" id="PTHR33280:SF1">
    <property type="entry name" value="LARGE RIBOSOMAL SUBUNIT PROTEIN BL31C"/>
    <property type="match status" value="1"/>
</dbReference>
<dbReference type="Pfam" id="PF01197">
    <property type="entry name" value="Ribosomal_L31"/>
    <property type="match status" value="1"/>
</dbReference>
<dbReference type="PRINTS" id="PR01249">
    <property type="entry name" value="RIBOSOMALL31"/>
</dbReference>
<dbReference type="SUPFAM" id="SSF143800">
    <property type="entry name" value="L28p-like"/>
    <property type="match status" value="1"/>
</dbReference>
<dbReference type="PROSITE" id="PS01143">
    <property type="entry name" value="RIBOSOMAL_L31"/>
    <property type="match status" value="1"/>
</dbReference>